<protein>
    <recommendedName>
        <fullName evidence="1">Isoleucine--tRNA ligase</fullName>
        <ecNumber evidence="1">6.1.1.5</ecNumber>
    </recommendedName>
    <alternativeName>
        <fullName evidence="1">Isoleucyl-tRNA synthetase</fullName>
        <shortName evidence="1">IleRS</shortName>
    </alternativeName>
</protein>
<sequence>MSEYKDTLNLPETGFPMRGNLANREPEMLKRWYKEDLYGEIRKAKKGKKSFVLHDGPPYANGDIHIGHALNKILKDIIIKSKTLSGFDAPYIPGWDCHGLPIELMVEKKVGKPGQKVTAAEFREKCREYAAGQVEGQKESFKRLGIMGEWDKPYRTMDFATEANIIRALGKIASKGHLLKGFKPVHWCTDCGSALAEAEVEYKDKVSPSIDVRFKAADEAALLSKFELTEGHEGQGDISIVIWTTTPWTLPANRAVCLRDDLEYVLIQTEGDNAERIIVAAELAKDVMDRAGIEHFHNLGFAKGADLELSQFQHPFYDFTVPAILGDHVTTDSGTGVVHTAPGHGQEDFAVGNKYNLEVANPVGSNGVYLPDTELFAGQHVFKANDAVVEVLKEKGALLHHHAYEHSYPHCWRHKTPIIFRATPQWFVSMDQAGLRAKALESIKNVEWMPEWGQSRIEGMIEGRPEWCISRQRTWGVPIALFVHKETAELHPNTLELIEKVAKLVEEKGIQAWWDVDAAELLGADADQYEKVLDTLDVWFDSGVTHFSVVDAREEYNGNSADLYLEGSDQHRGWFQSSLISSIAMKDEAPYKQVLTHGFVVDGHGRKMSKSIGNVVAPKDVTNKLGADILRLWVASTDYTGEVAVSDEILKRSADAYRRIRNTARFFLANLSGFNPETDIVPVEEMVALDRWAVGRALAAQEEIVKAYEEYNTHGVTQRLMQFCSIEMGSFYLDVIKDRQYTAKRGGNAQRSCQTALYYIVEALVRWMAPIMSFTADEIWNEMPGQRDKFVFTGEWFDGLFGLAEGEELNNEFWTEIQAVRGAVNKLLEDARKEKTIGGALQAEVTLFADDALAAKINKLEDELRFVLLTSAAKVKPLGEKTDAAQATDIEGLFVEVAAAEGEKCDRCWHHTPDVGTIEGHEKICGRCVSNVDGEGEVRKFA</sequence>
<proteinExistence type="inferred from homology"/>
<comment type="function">
    <text evidence="1">Catalyzes the attachment of isoleucine to tRNA(Ile). As IleRS can inadvertently accommodate and process structurally similar amino acids such as valine, to avoid such errors it has two additional distinct tRNA(Ile)-dependent editing activities. One activity is designated as 'pretransfer' editing and involves the hydrolysis of activated Val-AMP. The other activity is designated 'posttransfer' editing and involves deacylation of mischarged Val-tRNA(Ile).</text>
</comment>
<comment type="catalytic activity">
    <reaction evidence="1">
        <text>tRNA(Ile) + L-isoleucine + ATP = L-isoleucyl-tRNA(Ile) + AMP + diphosphate</text>
        <dbReference type="Rhea" id="RHEA:11060"/>
        <dbReference type="Rhea" id="RHEA-COMP:9666"/>
        <dbReference type="Rhea" id="RHEA-COMP:9695"/>
        <dbReference type="ChEBI" id="CHEBI:30616"/>
        <dbReference type="ChEBI" id="CHEBI:33019"/>
        <dbReference type="ChEBI" id="CHEBI:58045"/>
        <dbReference type="ChEBI" id="CHEBI:78442"/>
        <dbReference type="ChEBI" id="CHEBI:78528"/>
        <dbReference type="ChEBI" id="CHEBI:456215"/>
        <dbReference type="EC" id="6.1.1.5"/>
    </reaction>
</comment>
<comment type="cofactor">
    <cofactor evidence="1">
        <name>Zn(2+)</name>
        <dbReference type="ChEBI" id="CHEBI:29105"/>
    </cofactor>
    <text evidence="1">Binds 1 zinc ion per subunit.</text>
</comment>
<comment type="subunit">
    <text evidence="1">Monomer.</text>
</comment>
<comment type="subcellular location">
    <subcellularLocation>
        <location evidence="1">Cytoplasm</location>
    </subcellularLocation>
</comment>
<comment type="domain">
    <text evidence="1">IleRS has two distinct active sites: one for aminoacylation and one for editing. The misactivated valine is translocated from the active site to the editing site, which sterically excludes the correctly activated isoleucine. The single editing site contains two valyl binding pockets, one specific for each substrate (Val-AMP or Val-tRNA(Ile)).</text>
</comment>
<comment type="similarity">
    <text evidence="1">Belongs to the class-I aminoacyl-tRNA synthetase family. IleS type 1 subfamily.</text>
</comment>
<feature type="chain" id="PRO_1000022141" description="Isoleucine--tRNA ligase">
    <location>
        <begin position="1"/>
        <end position="942"/>
    </location>
</feature>
<feature type="short sequence motif" description="'HIGH' region">
    <location>
        <begin position="58"/>
        <end position="68"/>
    </location>
</feature>
<feature type="short sequence motif" description="'KMSKS' region">
    <location>
        <begin position="607"/>
        <end position="611"/>
    </location>
</feature>
<feature type="binding site" evidence="1">
    <location>
        <position position="566"/>
    </location>
    <ligand>
        <name>L-isoleucyl-5'-AMP</name>
        <dbReference type="ChEBI" id="CHEBI:178002"/>
    </ligand>
</feature>
<feature type="binding site" evidence="1">
    <location>
        <position position="610"/>
    </location>
    <ligand>
        <name>ATP</name>
        <dbReference type="ChEBI" id="CHEBI:30616"/>
    </ligand>
</feature>
<feature type="binding site" evidence="1">
    <location>
        <position position="905"/>
    </location>
    <ligand>
        <name>Zn(2+)</name>
        <dbReference type="ChEBI" id="CHEBI:29105"/>
    </ligand>
</feature>
<feature type="binding site" evidence="1">
    <location>
        <position position="908"/>
    </location>
    <ligand>
        <name>Zn(2+)</name>
        <dbReference type="ChEBI" id="CHEBI:29105"/>
    </ligand>
</feature>
<feature type="binding site" evidence="1">
    <location>
        <position position="925"/>
    </location>
    <ligand>
        <name>Zn(2+)</name>
        <dbReference type="ChEBI" id="CHEBI:29105"/>
    </ligand>
</feature>
<feature type="binding site" evidence="1">
    <location>
        <position position="928"/>
    </location>
    <ligand>
        <name>Zn(2+)</name>
        <dbReference type="ChEBI" id="CHEBI:29105"/>
    </ligand>
</feature>
<accession>A7MTD6</accession>
<dbReference type="EC" id="6.1.1.5" evidence="1"/>
<dbReference type="EMBL" id="CP000789">
    <property type="protein sequence ID" value="ABU69979.1"/>
    <property type="molecule type" value="Genomic_DNA"/>
</dbReference>
<dbReference type="RefSeq" id="WP_005533264.1">
    <property type="nucleotide sequence ID" value="NC_009783.1"/>
</dbReference>
<dbReference type="SMR" id="A7MTD6"/>
<dbReference type="KEGG" id="vha:VIBHAR_00980"/>
<dbReference type="PATRIC" id="fig|338187.25.peg.1641"/>
<dbReference type="Proteomes" id="UP000008152">
    <property type="component" value="Chromosome I"/>
</dbReference>
<dbReference type="GO" id="GO:0005829">
    <property type="term" value="C:cytosol"/>
    <property type="evidence" value="ECO:0007669"/>
    <property type="project" value="TreeGrafter"/>
</dbReference>
<dbReference type="GO" id="GO:0002161">
    <property type="term" value="F:aminoacyl-tRNA deacylase activity"/>
    <property type="evidence" value="ECO:0007669"/>
    <property type="project" value="InterPro"/>
</dbReference>
<dbReference type="GO" id="GO:0005524">
    <property type="term" value="F:ATP binding"/>
    <property type="evidence" value="ECO:0007669"/>
    <property type="project" value="UniProtKB-UniRule"/>
</dbReference>
<dbReference type="GO" id="GO:0004822">
    <property type="term" value="F:isoleucine-tRNA ligase activity"/>
    <property type="evidence" value="ECO:0007669"/>
    <property type="project" value="UniProtKB-UniRule"/>
</dbReference>
<dbReference type="GO" id="GO:0000049">
    <property type="term" value="F:tRNA binding"/>
    <property type="evidence" value="ECO:0007669"/>
    <property type="project" value="InterPro"/>
</dbReference>
<dbReference type="GO" id="GO:0008270">
    <property type="term" value="F:zinc ion binding"/>
    <property type="evidence" value="ECO:0007669"/>
    <property type="project" value="UniProtKB-UniRule"/>
</dbReference>
<dbReference type="GO" id="GO:0006428">
    <property type="term" value="P:isoleucyl-tRNA aminoacylation"/>
    <property type="evidence" value="ECO:0007669"/>
    <property type="project" value="UniProtKB-UniRule"/>
</dbReference>
<dbReference type="CDD" id="cd07960">
    <property type="entry name" value="Anticodon_Ia_Ile_BEm"/>
    <property type="match status" value="1"/>
</dbReference>
<dbReference type="CDD" id="cd00818">
    <property type="entry name" value="IleRS_core"/>
    <property type="match status" value="1"/>
</dbReference>
<dbReference type="FunFam" id="1.10.730.20:FF:000001">
    <property type="entry name" value="Isoleucine--tRNA ligase"/>
    <property type="match status" value="1"/>
</dbReference>
<dbReference type="FunFam" id="3.40.50.620:FF:000048">
    <property type="entry name" value="Isoleucine--tRNA ligase"/>
    <property type="match status" value="1"/>
</dbReference>
<dbReference type="FunFam" id="3.40.50.620:FF:000168">
    <property type="entry name" value="Isoleucine--tRNA ligase"/>
    <property type="match status" value="1"/>
</dbReference>
<dbReference type="Gene3D" id="1.10.730.20">
    <property type="match status" value="1"/>
</dbReference>
<dbReference type="Gene3D" id="3.40.50.620">
    <property type="entry name" value="HUPs"/>
    <property type="match status" value="2"/>
</dbReference>
<dbReference type="Gene3D" id="1.10.10.830">
    <property type="entry name" value="Ile-tRNA synthetase CP2 domain-like"/>
    <property type="match status" value="1"/>
</dbReference>
<dbReference type="HAMAP" id="MF_02002">
    <property type="entry name" value="Ile_tRNA_synth_type1"/>
    <property type="match status" value="1"/>
</dbReference>
<dbReference type="InterPro" id="IPR001412">
    <property type="entry name" value="aa-tRNA-synth_I_CS"/>
</dbReference>
<dbReference type="InterPro" id="IPR002300">
    <property type="entry name" value="aa-tRNA-synth_Ia"/>
</dbReference>
<dbReference type="InterPro" id="IPR033708">
    <property type="entry name" value="Anticodon_Ile_BEm"/>
</dbReference>
<dbReference type="InterPro" id="IPR002301">
    <property type="entry name" value="Ile-tRNA-ligase"/>
</dbReference>
<dbReference type="InterPro" id="IPR023585">
    <property type="entry name" value="Ile-tRNA-ligase_type1"/>
</dbReference>
<dbReference type="InterPro" id="IPR050081">
    <property type="entry name" value="Ile-tRNA_ligase"/>
</dbReference>
<dbReference type="InterPro" id="IPR013155">
    <property type="entry name" value="M/V/L/I-tRNA-synth_anticd-bd"/>
</dbReference>
<dbReference type="InterPro" id="IPR014729">
    <property type="entry name" value="Rossmann-like_a/b/a_fold"/>
</dbReference>
<dbReference type="InterPro" id="IPR009080">
    <property type="entry name" value="tRNAsynth_Ia_anticodon-bd"/>
</dbReference>
<dbReference type="InterPro" id="IPR009008">
    <property type="entry name" value="Val/Leu/Ile-tRNA-synth_edit"/>
</dbReference>
<dbReference type="InterPro" id="IPR010663">
    <property type="entry name" value="Znf_FPG/IleRS"/>
</dbReference>
<dbReference type="NCBIfam" id="TIGR00392">
    <property type="entry name" value="ileS"/>
    <property type="match status" value="1"/>
</dbReference>
<dbReference type="PANTHER" id="PTHR42765:SF1">
    <property type="entry name" value="ISOLEUCINE--TRNA LIGASE, MITOCHONDRIAL"/>
    <property type="match status" value="1"/>
</dbReference>
<dbReference type="PANTHER" id="PTHR42765">
    <property type="entry name" value="SOLEUCYL-TRNA SYNTHETASE"/>
    <property type="match status" value="1"/>
</dbReference>
<dbReference type="Pfam" id="PF08264">
    <property type="entry name" value="Anticodon_1"/>
    <property type="match status" value="1"/>
</dbReference>
<dbReference type="Pfam" id="PF00133">
    <property type="entry name" value="tRNA-synt_1"/>
    <property type="match status" value="1"/>
</dbReference>
<dbReference type="Pfam" id="PF06827">
    <property type="entry name" value="zf-FPG_IleRS"/>
    <property type="match status" value="1"/>
</dbReference>
<dbReference type="PRINTS" id="PR00984">
    <property type="entry name" value="TRNASYNTHILE"/>
</dbReference>
<dbReference type="SUPFAM" id="SSF47323">
    <property type="entry name" value="Anticodon-binding domain of a subclass of class I aminoacyl-tRNA synthetases"/>
    <property type="match status" value="1"/>
</dbReference>
<dbReference type="SUPFAM" id="SSF52374">
    <property type="entry name" value="Nucleotidylyl transferase"/>
    <property type="match status" value="1"/>
</dbReference>
<dbReference type="SUPFAM" id="SSF50677">
    <property type="entry name" value="ValRS/IleRS/LeuRS editing domain"/>
    <property type="match status" value="1"/>
</dbReference>
<dbReference type="PROSITE" id="PS00178">
    <property type="entry name" value="AA_TRNA_LIGASE_I"/>
    <property type="match status" value="1"/>
</dbReference>
<gene>
    <name evidence="1" type="primary">ileS</name>
    <name type="ordered locus">VIBHAR_00980</name>
</gene>
<keyword id="KW-0030">Aminoacyl-tRNA synthetase</keyword>
<keyword id="KW-0067">ATP-binding</keyword>
<keyword id="KW-0963">Cytoplasm</keyword>
<keyword id="KW-0436">Ligase</keyword>
<keyword id="KW-0479">Metal-binding</keyword>
<keyword id="KW-0547">Nucleotide-binding</keyword>
<keyword id="KW-0648">Protein biosynthesis</keyword>
<keyword id="KW-0862">Zinc</keyword>
<organism>
    <name type="scientific">Vibrio campbellii (strain ATCC BAA-1116)</name>
    <dbReference type="NCBI Taxonomy" id="2902295"/>
    <lineage>
        <taxon>Bacteria</taxon>
        <taxon>Pseudomonadati</taxon>
        <taxon>Pseudomonadota</taxon>
        <taxon>Gammaproteobacteria</taxon>
        <taxon>Vibrionales</taxon>
        <taxon>Vibrionaceae</taxon>
        <taxon>Vibrio</taxon>
    </lineage>
</organism>
<name>SYI_VIBC1</name>
<reference key="1">
    <citation type="submission" date="2007-08" db="EMBL/GenBank/DDBJ databases">
        <authorList>
            <consortium name="The Vibrio harveyi Genome Sequencing Project"/>
            <person name="Bassler B."/>
            <person name="Clifton S.W."/>
            <person name="Fulton L."/>
            <person name="Delehaunty K."/>
            <person name="Fronick C."/>
            <person name="Harrison M."/>
            <person name="Markivic C."/>
            <person name="Fulton R."/>
            <person name="Tin-Wollam A.-M."/>
            <person name="Shah N."/>
            <person name="Pepin K."/>
            <person name="Nash W."/>
            <person name="Thiruvilangam P."/>
            <person name="Bhonagiri V."/>
            <person name="Waters C."/>
            <person name="Tu K.C."/>
            <person name="Irgon J."/>
            <person name="Wilson R.K."/>
        </authorList>
    </citation>
    <scope>NUCLEOTIDE SEQUENCE [LARGE SCALE GENOMIC DNA]</scope>
    <source>
        <strain>ATCC BAA-1116 / BB120</strain>
    </source>
</reference>
<evidence type="ECO:0000255" key="1">
    <source>
        <dbReference type="HAMAP-Rule" id="MF_02002"/>
    </source>
</evidence>